<sequence>MFNLFLTDTVWYVGQIIFIVAVCLMVTIIVVAFLASIKRCIQLCGLCNTLLLSPSIYLYNRSKQLYKYYNEEVRPPPLEVDDNIIQTL</sequence>
<dbReference type="EMBL" id="X04997">
    <property type="protein sequence ID" value="CAA28655.1"/>
    <property type="molecule type" value="Genomic_RNA"/>
</dbReference>
<dbReference type="RefSeq" id="YP_209236.1">
    <property type="nucleotide sequence ID" value="AC_000192.1"/>
</dbReference>
<dbReference type="KEGG" id="vg:3283254"/>
<dbReference type="Proteomes" id="UP000007193">
    <property type="component" value="Genome"/>
</dbReference>
<dbReference type="GO" id="GO:0044178">
    <property type="term" value="C:host cell Golgi membrane"/>
    <property type="evidence" value="ECO:0007669"/>
    <property type="project" value="UniProtKB-SubCell"/>
</dbReference>
<dbReference type="GO" id="GO:0016020">
    <property type="term" value="C:membrane"/>
    <property type="evidence" value="ECO:0007669"/>
    <property type="project" value="UniProtKB-UniRule"/>
</dbReference>
<dbReference type="GO" id="GO:0140975">
    <property type="term" value="P:disruption of cellular anatomical structure in another organism"/>
    <property type="evidence" value="ECO:0007669"/>
    <property type="project" value="UniProtKB-UniRule"/>
</dbReference>
<dbReference type="GO" id="GO:0046760">
    <property type="term" value="P:viral budding from Golgi membrane"/>
    <property type="evidence" value="ECO:0007669"/>
    <property type="project" value="UniProtKB-UniRule"/>
</dbReference>
<dbReference type="CDD" id="cd21532">
    <property type="entry name" value="HKU1-CoV-like_E"/>
    <property type="match status" value="1"/>
</dbReference>
<dbReference type="HAMAP" id="MF_04204">
    <property type="entry name" value="BETA_CORONA_E"/>
    <property type="match status" value="1"/>
</dbReference>
<dbReference type="InterPro" id="IPR043506">
    <property type="entry name" value="E_protein_bCoV"/>
</dbReference>
<dbReference type="InterPro" id="IPR003873">
    <property type="entry name" value="E_protein_CoV"/>
</dbReference>
<dbReference type="Pfam" id="PF02723">
    <property type="entry name" value="CoV_E"/>
    <property type="match status" value="1"/>
</dbReference>
<dbReference type="PROSITE" id="PS51926">
    <property type="entry name" value="COV_E"/>
    <property type="match status" value="1"/>
</dbReference>
<name>VEMP_CVMJH</name>
<feature type="chain" id="PRO_0000106088" description="Envelope small membrane protein">
    <location>
        <begin position="1"/>
        <end position="88"/>
    </location>
</feature>
<feature type="topological domain" description="Virion surface" evidence="1">
    <location>
        <begin position="1"/>
        <end position="16"/>
    </location>
</feature>
<feature type="transmembrane region" description="Helical" evidence="1">
    <location>
        <begin position="17"/>
        <end position="37"/>
    </location>
</feature>
<feature type="topological domain" description="Intravirion" evidence="1">
    <location>
        <begin position="38"/>
        <end position="79"/>
    </location>
</feature>
<gene>
    <name evidence="1" type="primary">E</name>
    <name type="synonym">sM</name>
    <name type="ORF">5b</name>
</gene>
<comment type="function">
    <text evidence="1">Plays a central role in virus morphogenesis and assembly. Acts as a viroporin and self-assembles in host membranes forming pentameric protein-lipid pores that allow ion transport. Also plays a role in the induction of apoptosis.</text>
</comment>
<comment type="subunit">
    <text evidence="1">Homopentamer. Interacts with membrane protein M in the budding compartment of the host cell, which is located between endoplasmic reticulum and the Golgi complex. Interacts with Nucleoprotein.</text>
</comment>
<comment type="subcellular location">
    <subcellularLocation>
        <location evidence="1">Host Golgi apparatus membrane</location>
        <topology evidence="1">Single-pass type III membrane protein</topology>
    </subcellularLocation>
    <text evidence="1">The cytoplasmic tail functions as a Golgi complex-targeting signal.</text>
</comment>
<comment type="similarity">
    <text evidence="1">Belongs to the betacoronaviruses E protein family.</text>
</comment>
<accession>P06591</accession>
<organismHost>
    <name type="scientific">Mus musculus</name>
    <name type="common">Mouse</name>
    <dbReference type="NCBI Taxonomy" id="10090"/>
</organismHost>
<keyword id="KW-0053">Apoptosis</keyword>
<keyword id="KW-1040">Host Golgi apparatus</keyword>
<keyword id="KW-1043">Host membrane</keyword>
<keyword id="KW-0472">Membrane</keyword>
<keyword id="KW-0812">Transmembrane</keyword>
<keyword id="KW-1133">Transmembrane helix</keyword>
<reference key="1">
    <citation type="journal article" date="1985" name="J. Gen. Virol.">
        <title>Coronavirus MHV-JHM mRNA 5 has a sequence arrangement which potentially allows translation of a second, downstream open reading frame.</title>
        <authorList>
            <person name="Skinner M.A."/>
            <person name="Ebner D."/>
            <person name="Siddell S.G."/>
        </authorList>
    </citation>
    <scope>NUCLEOTIDE SEQUENCE [GENOMIC RNA]</scope>
</reference>
<protein>
    <recommendedName>
        <fullName evidence="1">Envelope small membrane protein</fullName>
        <shortName evidence="1">E protein</shortName>
        <shortName evidence="1">sM protein</shortName>
    </recommendedName>
</protein>
<organism>
    <name type="scientific">Murine coronavirus (strain JHM)</name>
    <name type="common">MHV-JHM</name>
    <name type="synonym">Murine hepatitis virus</name>
    <dbReference type="NCBI Taxonomy" id="11144"/>
    <lineage>
        <taxon>Viruses</taxon>
        <taxon>Riboviria</taxon>
        <taxon>Orthornavirae</taxon>
        <taxon>Pisuviricota</taxon>
        <taxon>Pisoniviricetes</taxon>
        <taxon>Nidovirales</taxon>
        <taxon>Cornidovirineae</taxon>
        <taxon>Coronaviridae</taxon>
        <taxon>Orthocoronavirinae</taxon>
        <taxon>Betacoronavirus</taxon>
        <taxon>Embecovirus</taxon>
        <taxon>Murine coronavirus</taxon>
    </lineage>
</organism>
<evidence type="ECO:0000255" key="1">
    <source>
        <dbReference type="HAMAP-Rule" id="MF_04204"/>
    </source>
</evidence>
<proteinExistence type="inferred from homology"/>